<organism>
    <name type="scientific">Mycobacterium bovis (strain ATCC BAA-935 / AF2122/97)</name>
    <dbReference type="NCBI Taxonomy" id="233413"/>
    <lineage>
        <taxon>Bacteria</taxon>
        <taxon>Bacillati</taxon>
        <taxon>Actinomycetota</taxon>
        <taxon>Actinomycetes</taxon>
        <taxon>Mycobacteriales</taxon>
        <taxon>Mycobacteriaceae</taxon>
        <taxon>Mycobacterium</taxon>
        <taxon>Mycobacterium tuberculosis complex</taxon>
    </lineage>
</organism>
<dbReference type="EC" id="2.6.1.9" evidence="2"/>
<dbReference type="EMBL" id="LT708304">
    <property type="protein sequence ID" value="SIU00864.1"/>
    <property type="molecule type" value="Genomic_DNA"/>
</dbReference>
<dbReference type="RefSeq" id="NP_855905.1">
    <property type="nucleotide sequence ID" value="NC_002945.3"/>
</dbReference>
<dbReference type="SMR" id="P63501"/>
<dbReference type="KEGG" id="mbo:BQ2027_MB2256C"/>
<dbReference type="PATRIC" id="fig|233413.5.peg.2473"/>
<dbReference type="Proteomes" id="UP000001419">
    <property type="component" value="Chromosome"/>
</dbReference>
<dbReference type="GO" id="GO:0005576">
    <property type="term" value="C:extracellular region"/>
    <property type="evidence" value="ECO:0007669"/>
    <property type="project" value="UniProtKB-SubCell"/>
</dbReference>
<dbReference type="GO" id="GO:0004400">
    <property type="term" value="F:histidinol-phosphate transaminase activity"/>
    <property type="evidence" value="ECO:0007669"/>
    <property type="project" value="RHEA"/>
</dbReference>
<dbReference type="GO" id="GO:0030170">
    <property type="term" value="F:pyridoxal phosphate binding"/>
    <property type="evidence" value="ECO:0007669"/>
    <property type="project" value="InterPro"/>
</dbReference>
<dbReference type="GO" id="GO:0009058">
    <property type="term" value="P:biosynthetic process"/>
    <property type="evidence" value="ECO:0007669"/>
    <property type="project" value="InterPro"/>
</dbReference>
<dbReference type="CDD" id="cd00609">
    <property type="entry name" value="AAT_like"/>
    <property type="match status" value="1"/>
</dbReference>
<dbReference type="Gene3D" id="3.90.1150.10">
    <property type="entry name" value="Aspartate Aminotransferase, domain 1"/>
    <property type="match status" value="1"/>
</dbReference>
<dbReference type="Gene3D" id="3.40.640.10">
    <property type="entry name" value="Type I PLP-dependent aspartate aminotransferase-like (Major domain)"/>
    <property type="match status" value="1"/>
</dbReference>
<dbReference type="InterPro" id="IPR004839">
    <property type="entry name" value="Aminotransferase_I/II_large"/>
</dbReference>
<dbReference type="InterPro" id="IPR004838">
    <property type="entry name" value="NHTrfase_class1_PyrdxlP-BS"/>
</dbReference>
<dbReference type="InterPro" id="IPR015424">
    <property type="entry name" value="PyrdxlP-dep_Trfase"/>
</dbReference>
<dbReference type="InterPro" id="IPR015421">
    <property type="entry name" value="PyrdxlP-dep_Trfase_major"/>
</dbReference>
<dbReference type="InterPro" id="IPR015422">
    <property type="entry name" value="PyrdxlP-dep_Trfase_small"/>
</dbReference>
<dbReference type="NCBIfam" id="NF005915">
    <property type="entry name" value="PRK07908.1"/>
    <property type="match status" value="1"/>
</dbReference>
<dbReference type="PANTHER" id="PTHR42885">
    <property type="entry name" value="HISTIDINOL-PHOSPHATE AMINOTRANSFERASE-RELATED"/>
    <property type="match status" value="1"/>
</dbReference>
<dbReference type="PANTHER" id="PTHR42885:SF1">
    <property type="entry name" value="THREONINE-PHOSPHATE DECARBOXYLASE"/>
    <property type="match status" value="1"/>
</dbReference>
<dbReference type="Pfam" id="PF00155">
    <property type="entry name" value="Aminotran_1_2"/>
    <property type="match status" value="1"/>
</dbReference>
<dbReference type="SUPFAM" id="SSF53383">
    <property type="entry name" value="PLP-dependent transferases"/>
    <property type="match status" value="1"/>
</dbReference>
<dbReference type="PROSITE" id="PS00105">
    <property type="entry name" value="AA_TRANSFER_CLASS_1"/>
    <property type="match status" value="1"/>
</dbReference>
<evidence type="ECO:0000250" key="1">
    <source>
        <dbReference type="UniProtKB" id="P9WML5"/>
    </source>
</evidence>
<evidence type="ECO:0000250" key="2">
    <source>
        <dbReference type="UniProtKB" id="P9WQ89"/>
    </source>
</evidence>
<evidence type="ECO:0000305" key="3"/>
<gene>
    <name type="ordered locus">BQ2027_MB2256C</name>
</gene>
<keyword id="KW-0032">Aminotransferase</keyword>
<keyword id="KW-0134">Cell wall</keyword>
<keyword id="KW-0663">Pyridoxal phosphate</keyword>
<keyword id="KW-1185">Reference proteome</keyword>
<keyword id="KW-0964">Secreted</keyword>
<keyword id="KW-0808">Transferase</keyword>
<sequence length="364" mass="38937">MLWILGPHTGPLLFDAVASLDTSPLAAARYHGDQDVAPGVLDFAVNVRHDRPPEWLVRQLAALLPELARYPSTDDVHRAQDAVAERHGRTRDEVLPLVGAAEGFALLHNLSPVRAAIVVPAFTEPAIALSAAGITAHHVVLKPPFVLDTAHVPDDADLVVVGNPTNPTSVLHLREQLLELRRPGRILVVDEAFADWVPGEPQSLADDSLPDVLVLRSLTKTWSLAGLRVGYALGSPDVLARLTVQRAHWPLGTLQLTAIAACCAPRAVAAAAADAVRLTALRAEMVAGLRSVGAEVVDGAAPFVLFNIADADGLRNYLQSKGIAVRRGDTFVGLDARYLRAAVRPEWPVLVAAIAEWAKRGGRR</sequence>
<reference key="1">
    <citation type="journal article" date="2003" name="Proc. Natl. Acad. Sci. U.S.A.">
        <title>The complete genome sequence of Mycobacterium bovis.</title>
        <authorList>
            <person name="Garnier T."/>
            <person name="Eiglmeier K."/>
            <person name="Camus J.-C."/>
            <person name="Medina N."/>
            <person name="Mansoor H."/>
            <person name="Pryor M."/>
            <person name="Duthoy S."/>
            <person name="Grondin S."/>
            <person name="Lacroix C."/>
            <person name="Monsempe C."/>
            <person name="Simon S."/>
            <person name="Harris B."/>
            <person name="Atkin R."/>
            <person name="Doggett J."/>
            <person name="Mayes R."/>
            <person name="Keating L."/>
            <person name="Wheeler P.R."/>
            <person name="Parkhill J."/>
            <person name="Barrell B.G."/>
            <person name="Cole S.T."/>
            <person name="Gordon S.V."/>
            <person name="Hewinson R.G."/>
        </authorList>
    </citation>
    <scope>NUCLEOTIDE SEQUENCE [LARGE SCALE GENOMIC DNA]</scope>
    <source>
        <strain>ATCC BAA-935 / AF2122/97</strain>
    </source>
</reference>
<reference key="2">
    <citation type="journal article" date="2017" name="Genome Announc.">
        <title>Updated reference genome sequence and annotation of Mycobacterium bovis AF2122/97.</title>
        <authorList>
            <person name="Malone K.M."/>
            <person name="Farrell D."/>
            <person name="Stuber T.P."/>
            <person name="Schubert O.T."/>
            <person name="Aebersold R."/>
            <person name="Robbe-Austerman S."/>
            <person name="Gordon S.V."/>
        </authorList>
    </citation>
    <scope>NUCLEOTIDE SEQUENCE [LARGE SCALE GENOMIC DNA]</scope>
    <scope>GENOME REANNOTATION</scope>
    <source>
        <strain>ATCC BAA-935 / AF2122/97</strain>
    </source>
</reference>
<name>HSPAT_MYCBO</name>
<accession>P63501</accession>
<accession>A0A1R3Y2Q9</accession>
<accession>Q10503</accession>
<accession>X2BK63</accession>
<comment type="function">
    <text evidence="2">Aminotransferase that catalyzes the conversion of histidinol phosphate and 2-oxoglutarate into L-glutamate and imidazole acetol phosphate. Might play a significant role in mediating histidine biosynthesis during infection. Facilitates mycobacterial survival and virulence in macrophages.</text>
</comment>
<comment type="catalytic activity">
    <reaction evidence="2">
        <text>L-histidinol phosphate + 2-oxoglutarate = 3-(imidazol-4-yl)-2-oxopropyl phosphate + L-glutamate</text>
        <dbReference type="Rhea" id="RHEA:23744"/>
        <dbReference type="ChEBI" id="CHEBI:16810"/>
        <dbReference type="ChEBI" id="CHEBI:29985"/>
        <dbReference type="ChEBI" id="CHEBI:57766"/>
        <dbReference type="ChEBI" id="CHEBI:57980"/>
        <dbReference type="EC" id="2.6.1.9"/>
    </reaction>
</comment>
<comment type="cofactor">
    <cofactor evidence="2">
        <name>pyridoxal 5'-phosphate</name>
        <dbReference type="ChEBI" id="CHEBI:597326"/>
    </cofactor>
</comment>
<comment type="subunit">
    <text evidence="2">Monomer.</text>
</comment>
<comment type="subcellular location">
    <subcellularLocation>
        <location evidence="2">Secreted</location>
    </subcellularLocation>
    <subcellularLocation>
        <location evidence="2">Secreted</location>
        <location evidence="2">Cell wall</location>
    </subcellularLocation>
</comment>
<comment type="similarity">
    <text evidence="3">Belongs to the class-I pyridoxal-phosphate-dependent aminotransferase family.</text>
</comment>
<protein>
    <recommendedName>
        <fullName evidence="2">Histidinol-phosphate aminotransferase BQ2027_MB2256C</fullName>
        <shortName evidence="2">HspAT</shortName>
        <ecNumber evidence="2">2.6.1.9</ecNumber>
    </recommendedName>
</protein>
<feature type="chain" id="PRO_0000123928" description="Histidinol-phosphate aminotransferase BQ2027_MB2256C">
    <location>
        <begin position="1"/>
        <end position="364"/>
    </location>
</feature>
<feature type="modified residue" description="N6-(pyridoxal phosphate)lysine" evidence="1">
    <location>
        <position position="220"/>
    </location>
</feature>
<proteinExistence type="inferred from homology"/>